<comment type="function">
    <text evidence="1">The RuvA-RuvB-RuvC complex processes Holliday junction (HJ) DNA during genetic recombination and DNA repair. Endonuclease that resolves HJ intermediates. Cleaves cruciform DNA by making single-stranded nicks across the HJ at symmetrical positions within the homologous arms, yielding a 5'-phosphate and a 3'-hydroxyl group; requires a central core of homology in the junction. The consensus cleavage sequence is 5'-(A/T)TT(C/G)-3'. Cleavage occurs on the 3'-side of the TT dinucleotide at the point of strand exchange. HJ branch migration catalyzed by RuvA-RuvB allows RuvC to scan DNA until it finds its consensus sequence, where it cleaves and resolves the cruciform DNA.</text>
</comment>
<comment type="catalytic activity">
    <reaction evidence="1">
        <text>Endonucleolytic cleavage at a junction such as a reciprocal single-stranded crossover between two homologous DNA duplexes (Holliday junction).</text>
        <dbReference type="EC" id="3.1.21.10"/>
    </reaction>
</comment>
<comment type="cofactor">
    <cofactor evidence="1">
        <name>Mg(2+)</name>
        <dbReference type="ChEBI" id="CHEBI:18420"/>
    </cofactor>
    <text evidence="1">Binds 2 Mg(2+) ion per subunit.</text>
</comment>
<comment type="subunit">
    <text evidence="1">Homodimer which binds Holliday junction (HJ) DNA. The HJ becomes 2-fold symmetrical on binding to RuvC with unstacked arms; it has a different conformation from HJ DNA in complex with RuvA. In the full resolvosome a probable DNA-RuvA(4)-RuvB(12)-RuvC(2) complex forms which resolves the HJ.</text>
</comment>
<comment type="subcellular location">
    <subcellularLocation>
        <location evidence="1">Cytoplasm</location>
    </subcellularLocation>
</comment>
<comment type="similarity">
    <text evidence="1">Belongs to the RuvC family.</text>
</comment>
<evidence type="ECO:0000255" key="1">
    <source>
        <dbReference type="HAMAP-Rule" id="MF_00034"/>
    </source>
</evidence>
<keyword id="KW-0963">Cytoplasm</keyword>
<keyword id="KW-0227">DNA damage</keyword>
<keyword id="KW-0233">DNA recombination</keyword>
<keyword id="KW-0234">DNA repair</keyword>
<keyword id="KW-0238">DNA-binding</keyword>
<keyword id="KW-0255">Endonuclease</keyword>
<keyword id="KW-0378">Hydrolase</keyword>
<keyword id="KW-0460">Magnesium</keyword>
<keyword id="KW-0479">Metal-binding</keyword>
<keyword id="KW-0540">Nuclease</keyword>
<keyword id="KW-1185">Reference proteome</keyword>
<protein>
    <recommendedName>
        <fullName evidence="1">Crossover junction endodeoxyribonuclease RuvC</fullName>
        <ecNumber evidence="1">3.1.21.10</ecNumber>
    </recommendedName>
    <alternativeName>
        <fullName evidence="1">Holliday junction nuclease RuvC</fullName>
    </alternativeName>
    <alternativeName>
        <fullName evidence="1">Holliday junction resolvase RuvC</fullName>
    </alternativeName>
</protein>
<gene>
    <name evidence="1" type="primary">ruvC</name>
    <name type="ordered locus">sce5077</name>
</gene>
<dbReference type="EC" id="3.1.21.10" evidence="1"/>
<dbReference type="EMBL" id="AM746676">
    <property type="protein sequence ID" value="CAN95240.1"/>
    <property type="molecule type" value="Genomic_DNA"/>
</dbReference>
<dbReference type="RefSeq" id="WP_012237708.1">
    <property type="nucleotide sequence ID" value="NC_010162.1"/>
</dbReference>
<dbReference type="SMR" id="A9FR00"/>
<dbReference type="STRING" id="448385.sce5077"/>
<dbReference type="KEGG" id="scl:sce5077"/>
<dbReference type="eggNOG" id="COG0817">
    <property type="taxonomic scope" value="Bacteria"/>
</dbReference>
<dbReference type="HOGENOM" id="CLU_091257_1_0_7"/>
<dbReference type="OrthoDB" id="9805499at2"/>
<dbReference type="BioCyc" id="SCEL448385:SCE_RS26065-MONOMER"/>
<dbReference type="Proteomes" id="UP000002139">
    <property type="component" value="Chromosome"/>
</dbReference>
<dbReference type="GO" id="GO:0005737">
    <property type="term" value="C:cytoplasm"/>
    <property type="evidence" value="ECO:0007669"/>
    <property type="project" value="UniProtKB-SubCell"/>
</dbReference>
<dbReference type="GO" id="GO:0048476">
    <property type="term" value="C:Holliday junction resolvase complex"/>
    <property type="evidence" value="ECO:0007669"/>
    <property type="project" value="UniProtKB-UniRule"/>
</dbReference>
<dbReference type="GO" id="GO:0008821">
    <property type="term" value="F:crossover junction DNA endonuclease activity"/>
    <property type="evidence" value="ECO:0007669"/>
    <property type="project" value="UniProtKB-UniRule"/>
</dbReference>
<dbReference type="GO" id="GO:0003677">
    <property type="term" value="F:DNA binding"/>
    <property type="evidence" value="ECO:0007669"/>
    <property type="project" value="UniProtKB-KW"/>
</dbReference>
<dbReference type="GO" id="GO:0000287">
    <property type="term" value="F:magnesium ion binding"/>
    <property type="evidence" value="ECO:0007669"/>
    <property type="project" value="UniProtKB-UniRule"/>
</dbReference>
<dbReference type="GO" id="GO:0006310">
    <property type="term" value="P:DNA recombination"/>
    <property type="evidence" value="ECO:0007669"/>
    <property type="project" value="UniProtKB-UniRule"/>
</dbReference>
<dbReference type="GO" id="GO:0006281">
    <property type="term" value="P:DNA repair"/>
    <property type="evidence" value="ECO:0007669"/>
    <property type="project" value="UniProtKB-UniRule"/>
</dbReference>
<dbReference type="CDD" id="cd16962">
    <property type="entry name" value="RuvC"/>
    <property type="match status" value="1"/>
</dbReference>
<dbReference type="FunFam" id="3.30.420.10:FF:000002">
    <property type="entry name" value="Crossover junction endodeoxyribonuclease RuvC"/>
    <property type="match status" value="1"/>
</dbReference>
<dbReference type="Gene3D" id="3.30.420.10">
    <property type="entry name" value="Ribonuclease H-like superfamily/Ribonuclease H"/>
    <property type="match status" value="1"/>
</dbReference>
<dbReference type="HAMAP" id="MF_00034">
    <property type="entry name" value="RuvC"/>
    <property type="match status" value="1"/>
</dbReference>
<dbReference type="InterPro" id="IPR012337">
    <property type="entry name" value="RNaseH-like_sf"/>
</dbReference>
<dbReference type="InterPro" id="IPR036397">
    <property type="entry name" value="RNaseH_sf"/>
</dbReference>
<dbReference type="InterPro" id="IPR020563">
    <property type="entry name" value="X-over_junc_endoDNase_Mg_BS"/>
</dbReference>
<dbReference type="InterPro" id="IPR002176">
    <property type="entry name" value="X-over_junc_endoDNase_RuvC"/>
</dbReference>
<dbReference type="NCBIfam" id="TIGR00228">
    <property type="entry name" value="ruvC"/>
    <property type="match status" value="1"/>
</dbReference>
<dbReference type="PANTHER" id="PTHR30194">
    <property type="entry name" value="CROSSOVER JUNCTION ENDODEOXYRIBONUCLEASE RUVC"/>
    <property type="match status" value="1"/>
</dbReference>
<dbReference type="PANTHER" id="PTHR30194:SF3">
    <property type="entry name" value="CROSSOVER JUNCTION ENDODEOXYRIBONUCLEASE RUVC"/>
    <property type="match status" value="1"/>
</dbReference>
<dbReference type="Pfam" id="PF02075">
    <property type="entry name" value="RuvC"/>
    <property type="match status" value="1"/>
</dbReference>
<dbReference type="PRINTS" id="PR00696">
    <property type="entry name" value="RSOLVASERUVC"/>
</dbReference>
<dbReference type="SUPFAM" id="SSF53098">
    <property type="entry name" value="Ribonuclease H-like"/>
    <property type="match status" value="1"/>
</dbReference>
<dbReference type="PROSITE" id="PS01321">
    <property type="entry name" value="RUVC"/>
    <property type="match status" value="1"/>
</dbReference>
<organism>
    <name type="scientific">Sorangium cellulosum (strain So ce56)</name>
    <name type="common">Polyangium cellulosum (strain So ce56)</name>
    <dbReference type="NCBI Taxonomy" id="448385"/>
    <lineage>
        <taxon>Bacteria</taxon>
        <taxon>Pseudomonadati</taxon>
        <taxon>Myxococcota</taxon>
        <taxon>Polyangia</taxon>
        <taxon>Polyangiales</taxon>
        <taxon>Polyangiaceae</taxon>
        <taxon>Sorangium</taxon>
    </lineage>
</organism>
<reference key="1">
    <citation type="journal article" date="2007" name="Nat. Biotechnol.">
        <title>Complete genome sequence of the myxobacterium Sorangium cellulosum.</title>
        <authorList>
            <person name="Schneiker S."/>
            <person name="Perlova O."/>
            <person name="Kaiser O."/>
            <person name="Gerth K."/>
            <person name="Alici A."/>
            <person name="Altmeyer M.O."/>
            <person name="Bartels D."/>
            <person name="Bekel T."/>
            <person name="Beyer S."/>
            <person name="Bode E."/>
            <person name="Bode H.B."/>
            <person name="Bolten C.J."/>
            <person name="Choudhuri J.V."/>
            <person name="Doss S."/>
            <person name="Elnakady Y.A."/>
            <person name="Frank B."/>
            <person name="Gaigalat L."/>
            <person name="Goesmann A."/>
            <person name="Groeger C."/>
            <person name="Gross F."/>
            <person name="Jelsbak L."/>
            <person name="Jelsbak L."/>
            <person name="Kalinowski J."/>
            <person name="Kegler C."/>
            <person name="Knauber T."/>
            <person name="Konietzny S."/>
            <person name="Kopp M."/>
            <person name="Krause L."/>
            <person name="Krug D."/>
            <person name="Linke B."/>
            <person name="Mahmud T."/>
            <person name="Martinez-Arias R."/>
            <person name="McHardy A.C."/>
            <person name="Merai M."/>
            <person name="Meyer F."/>
            <person name="Mormann S."/>
            <person name="Munoz-Dorado J."/>
            <person name="Perez J."/>
            <person name="Pradella S."/>
            <person name="Rachid S."/>
            <person name="Raddatz G."/>
            <person name="Rosenau F."/>
            <person name="Rueckert C."/>
            <person name="Sasse F."/>
            <person name="Scharfe M."/>
            <person name="Schuster S.C."/>
            <person name="Suen G."/>
            <person name="Treuner-Lange A."/>
            <person name="Velicer G.J."/>
            <person name="Vorholter F.-J."/>
            <person name="Weissman K.J."/>
            <person name="Welch R.D."/>
            <person name="Wenzel S.C."/>
            <person name="Whitworth D.E."/>
            <person name="Wilhelm S."/>
            <person name="Wittmann C."/>
            <person name="Bloecker H."/>
            <person name="Puehler A."/>
            <person name="Mueller R."/>
        </authorList>
    </citation>
    <scope>NUCLEOTIDE SEQUENCE [LARGE SCALE GENOMIC DNA]</scope>
    <source>
        <strain>So ce56</strain>
    </source>
</reference>
<proteinExistence type="inferred from homology"/>
<sequence>MRVLGIDPGSRHLGWGLLVRQGTRIEHVAHGVIDIDTSGTFAARLVEIDDELGKVIASHAPDAAAVESLFFAKDAQSAAKLGHARGVVLLRLARAGVPISEYPPALVKRTIVGRGAAEKAQVAQVMTAVLRLAAPPRPDAADALAIAMTHLSAAGFAAALAASGAPVPRRARPRRARLG</sequence>
<accession>A9FR00</accession>
<name>RUVC_SORC5</name>
<feature type="chain" id="PRO_1000074503" description="Crossover junction endodeoxyribonuclease RuvC">
    <location>
        <begin position="1"/>
        <end position="179"/>
    </location>
</feature>
<feature type="active site" evidence="1">
    <location>
        <position position="7"/>
    </location>
</feature>
<feature type="active site" evidence="1">
    <location>
        <position position="67"/>
    </location>
</feature>
<feature type="active site" evidence="1">
    <location>
        <position position="139"/>
    </location>
</feature>
<feature type="binding site" evidence="1">
    <location>
        <position position="7"/>
    </location>
    <ligand>
        <name>Mg(2+)</name>
        <dbReference type="ChEBI" id="CHEBI:18420"/>
        <label>1</label>
    </ligand>
</feature>
<feature type="binding site" evidence="1">
    <location>
        <position position="67"/>
    </location>
    <ligand>
        <name>Mg(2+)</name>
        <dbReference type="ChEBI" id="CHEBI:18420"/>
        <label>2</label>
    </ligand>
</feature>
<feature type="binding site" evidence="1">
    <location>
        <position position="139"/>
    </location>
    <ligand>
        <name>Mg(2+)</name>
        <dbReference type="ChEBI" id="CHEBI:18420"/>
        <label>1</label>
    </ligand>
</feature>